<gene>
    <name evidence="1" type="primary">ctaG</name>
    <name type="ordered locus">BR0471</name>
    <name type="ordered locus">BS1330_I0472</name>
</gene>
<proteinExistence type="inferred from homology"/>
<comment type="function">
    <text evidence="1">Exerts its effect at some terminal stage of cytochrome c oxidase synthesis, probably by being involved in the insertion of the copper B into subunit I.</text>
</comment>
<comment type="subcellular location">
    <subcellularLocation>
        <location evidence="1">Cell inner membrane</location>
        <topology evidence="1">Single-pass type II membrane protein</topology>
        <orientation evidence="1">Periplasmic side</orientation>
    </subcellularLocation>
</comment>
<comment type="similarity">
    <text evidence="1">Belongs to the COX11/CtaG family.</text>
</comment>
<organism>
    <name type="scientific">Brucella suis biovar 1 (strain 1330)</name>
    <dbReference type="NCBI Taxonomy" id="204722"/>
    <lineage>
        <taxon>Bacteria</taxon>
        <taxon>Pseudomonadati</taxon>
        <taxon>Pseudomonadota</taxon>
        <taxon>Alphaproteobacteria</taxon>
        <taxon>Hyphomicrobiales</taxon>
        <taxon>Brucellaceae</taxon>
        <taxon>Brucella/Ochrobactrum group</taxon>
        <taxon>Brucella</taxon>
    </lineage>
</organism>
<reference key="1">
    <citation type="journal article" date="2002" name="Proc. Natl. Acad. Sci. U.S.A.">
        <title>The Brucella suis genome reveals fundamental similarities between animal and plant pathogens and symbionts.</title>
        <authorList>
            <person name="Paulsen I.T."/>
            <person name="Seshadri R."/>
            <person name="Nelson K.E."/>
            <person name="Eisen J.A."/>
            <person name="Heidelberg J.F."/>
            <person name="Read T.D."/>
            <person name="Dodson R.J."/>
            <person name="Umayam L.A."/>
            <person name="Brinkac L.M."/>
            <person name="Beanan M.J."/>
            <person name="Daugherty S.C."/>
            <person name="DeBoy R.T."/>
            <person name="Durkin A.S."/>
            <person name="Kolonay J.F."/>
            <person name="Madupu R."/>
            <person name="Nelson W.C."/>
            <person name="Ayodeji B."/>
            <person name="Kraul M."/>
            <person name="Shetty J."/>
            <person name="Malek J.A."/>
            <person name="Van Aken S.E."/>
            <person name="Riedmuller S."/>
            <person name="Tettelin H."/>
            <person name="Gill S.R."/>
            <person name="White O."/>
            <person name="Salzberg S.L."/>
            <person name="Hoover D.L."/>
            <person name="Lindler L.E."/>
            <person name="Halling S.M."/>
            <person name="Boyle S.M."/>
            <person name="Fraser C.M."/>
        </authorList>
    </citation>
    <scope>NUCLEOTIDE SEQUENCE [LARGE SCALE GENOMIC DNA]</scope>
    <source>
        <strain>1330</strain>
    </source>
</reference>
<reference key="2">
    <citation type="journal article" date="2011" name="J. Bacteriol.">
        <title>Revised genome sequence of Brucella suis 1330.</title>
        <authorList>
            <person name="Tae H."/>
            <person name="Shallom S."/>
            <person name="Settlage R."/>
            <person name="Preston D."/>
            <person name="Adams L.G."/>
            <person name="Garner H.R."/>
        </authorList>
    </citation>
    <scope>NUCLEOTIDE SEQUENCE [LARGE SCALE GENOMIC DNA]</scope>
    <source>
        <strain>1330</strain>
    </source>
</reference>
<keyword id="KW-0997">Cell inner membrane</keyword>
<keyword id="KW-1003">Cell membrane</keyword>
<keyword id="KW-0186">Copper</keyword>
<keyword id="KW-0472">Membrane</keyword>
<keyword id="KW-0735">Signal-anchor</keyword>
<keyword id="KW-0812">Transmembrane</keyword>
<keyword id="KW-1133">Transmembrane helix</keyword>
<evidence type="ECO:0000255" key="1">
    <source>
        <dbReference type="HAMAP-Rule" id="MF_00155"/>
    </source>
</evidence>
<sequence>MTDQGENEKKQRRSNATIAVACLSFFVCMIGAAYASVPLYRIFCQVTGYGGTTQRVEQYSDTILDKTIKVRFDANIANGLPWDFKPMQREVTVRIGETTMIKYEAHNLFGEETYGRASFNVAPGRAGAYFNKVECFCFTDNTLKPGEDLELPVVFFVDPEFVNDPDLKDVKTITLSYTFFPIDKPRPVVNAKAVGSTRNGG</sequence>
<feature type="chain" id="PRO_0000206034" description="Cytochrome c oxidase assembly protein CtaG">
    <location>
        <begin position="1"/>
        <end position="201"/>
    </location>
</feature>
<feature type="topological domain" description="Cytoplasmic" evidence="1">
    <location>
        <begin position="1"/>
        <end position="12"/>
    </location>
</feature>
<feature type="transmembrane region" description="Helical; Signal-anchor for type II membrane protein" evidence="1">
    <location>
        <begin position="13"/>
        <end position="35"/>
    </location>
</feature>
<feature type="topological domain" description="Periplasmic" evidence="1">
    <location>
        <begin position="36"/>
        <end position="201"/>
    </location>
</feature>
<name>COXZ_BRUSU</name>
<accession>Q8G261</accession>
<accession>G0K720</accession>
<dbReference type="EMBL" id="AE014291">
    <property type="protein sequence ID" value="AAN29414.1"/>
    <property type="molecule type" value="Genomic_DNA"/>
</dbReference>
<dbReference type="EMBL" id="CP002997">
    <property type="protein sequence ID" value="AEM17827.1"/>
    <property type="molecule type" value="Genomic_DNA"/>
</dbReference>
<dbReference type="RefSeq" id="WP_004690616.1">
    <property type="nucleotide sequence ID" value="NZ_KN046804.1"/>
</dbReference>
<dbReference type="SMR" id="Q8G261"/>
<dbReference type="KEGG" id="bms:BR0471"/>
<dbReference type="KEGG" id="bsi:BS1330_I0472"/>
<dbReference type="PATRIC" id="fig|204722.21.peg.1430"/>
<dbReference type="HOGENOM" id="CLU_045000_5_0_5"/>
<dbReference type="PhylomeDB" id="Q8G261"/>
<dbReference type="Proteomes" id="UP000007104">
    <property type="component" value="Chromosome I"/>
</dbReference>
<dbReference type="GO" id="GO:0005886">
    <property type="term" value="C:plasma membrane"/>
    <property type="evidence" value="ECO:0007669"/>
    <property type="project" value="UniProtKB-SubCell"/>
</dbReference>
<dbReference type="GO" id="GO:0005507">
    <property type="term" value="F:copper ion binding"/>
    <property type="evidence" value="ECO:0007669"/>
    <property type="project" value="InterPro"/>
</dbReference>
<dbReference type="GO" id="GO:0008535">
    <property type="term" value="P:respiratory chain complex IV assembly"/>
    <property type="evidence" value="ECO:0007669"/>
    <property type="project" value="UniProtKB-UniRule"/>
</dbReference>
<dbReference type="FunFam" id="2.60.370.10:FF:000001">
    <property type="entry name" value="COX11 cytochrome c oxidase assembly homolog"/>
    <property type="match status" value="1"/>
</dbReference>
<dbReference type="Gene3D" id="2.60.370.10">
    <property type="entry name" value="Ctag/Cox11"/>
    <property type="match status" value="1"/>
</dbReference>
<dbReference type="HAMAP" id="MF_00155">
    <property type="entry name" value="CtaG"/>
    <property type="match status" value="1"/>
</dbReference>
<dbReference type="InterPro" id="IPR023471">
    <property type="entry name" value="CtaG/Cox11_dom_sf"/>
</dbReference>
<dbReference type="InterPro" id="IPR007533">
    <property type="entry name" value="Cyt_c_oxidase_assmbl_CtaG"/>
</dbReference>
<dbReference type="NCBIfam" id="NF003465">
    <property type="entry name" value="PRK05089.1"/>
    <property type="match status" value="1"/>
</dbReference>
<dbReference type="PANTHER" id="PTHR21320:SF3">
    <property type="entry name" value="CYTOCHROME C OXIDASE ASSEMBLY PROTEIN COX11, MITOCHONDRIAL-RELATED"/>
    <property type="match status" value="1"/>
</dbReference>
<dbReference type="PANTHER" id="PTHR21320">
    <property type="entry name" value="CYTOCHROME C OXIDASE ASSEMBLY PROTEIN COX11-RELATED"/>
    <property type="match status" value="1"/>
</dbReference>
<dbReference type="Pfam" id="PF04442">
    <property type="entry name" value="CtaG_Cox11"/>
    <property type="match status" value="1"/>
</dbReference>
<dbReference type="PIRSF" id="PIRSF005413">
    <property type="entry name" value="COX11"/>
    <property type="match status" value="1"/>
</dbReference>
<dbReference type="SUPFAM" id="SSF110111">
    <property type="entry name" value="Ctag/Cox11"/>
    <property type="match status" value="1"/>
</dbReference>
<protein>
    <recommendedName>
        <fullName evidence="1">Cytochrome c oxidase assembly protein CtaG</fullName>
    </recommendedName>
</protein>